<comment type="function">
    <text evidence="1">Binds as a heterodimer with protein bS6 to the central domain of the 16S rRNA, where it helps stabilize the platform of the 30S subunit.</text>
</comment>
<comment type="subunit">
    <text evidence="1">Part of the 30S ribosomal subunit. Forms a tight heterodimer with protein bS6.</text>
</comment>
<comment type="similarity">
    <text evidence="1">Belongs to the bacterial ribosomal protein bS18 family.</text>
</comment>
<keyword id="KW-0687">Ribonucleoprotein</keyword>
<keyword id="KW-0689">Ribosomal protein</keyword>
<keyword id="KW-0694">RNA-binding</keyword>
<keyword id="KW-0699">rRNA-binding</keyword>
<organism>
    <name type="scientific">Mycobacterium sp. (strain JLS)</name>
    <dbReference type="NCBI Taxonomy" id="164757"/>
    <lineage>
        <taxon>Bacteria</taxon>
        <taxon>Bacillati</taxon>
        <taxon>Actinomycetota</taxon>
        <taxon>Actinomycetes</taxon>
        <taxon>Mycobacteriales</taxon>
        <taxon>Mycobacteriaceae</taxon>
        <taxon>Mycobacterium</taxon>
    </lineage>
</organism>
<gene>
    <name evidence="1" type="primary">rpsR</name>
    <name type="ordered locus">Mjls_5744</name>
</gene>
<name>RS18_MYCSJ</name>
<sequence length="84" mass="9516">MAKSNKRRPAPEKPVKTRKCVFCSKKGQDIDYKDTALLRTYISERGKIRARRVTGNCVQHQRDIAVAVKNAREVALLPFGSSTR</sequence>
<accession>A3Q8N0</accession>
<feature type="chain" id="PRO_1000003540" description="Small ribosomal subunit protein bS18">
    <location>
        <begin position="1"/>
        <end position="84"/>
    </location>
</feature>
<protein>
    <recommendedName>
        <fullName evidence="1">Small ribosomal subunit protein bS18</fullName>
    </recommendedName>
    <alternativeName>
        <fullName evidence="2">30S ribosomal protein S18</fullName>
    </alternativeName>
</protein>
<dbReference type="EMBL" id="CP000580">
    <property type="protein sequence ID" value="ABO01508.1"/>
    <property type="molecule type" value="Genomic_DNA"/>
</dbReference>
<dbReference type="SMR" id="A3Q8N0"/>
<dbReference type="KEGG" id="mjl:Mjls_5744"/>
<dbReference type="HOGENOM" id="CLU_148710_2_2_11"/>
<dbReference type="BioCyc" id="MSP164757:G1G8C-5806-MONOMER"/>
<dbReference type="GO" id="GO:0022627">
    <property type="term" value="C:cytosolic small ribosomal subunit"/>
    <property type="evidence" value="ECO:0007669"/>
    <property type="project" value="TreeGrafter"/>
</dbReference>
<dbReference type="GO" id="GO:0070181">
    <property type="term" value="F:small ribosomal subunit rRNA binding"/>
    <property type="evidence" value="ECO:0007669"/>
    <property type="project" value="TreeGrafter"/>
</dbReference>
<dbReference type="GO" id="GO:0003735">
    <property type="term" value="F:structural constituent of ribosome"/>
    <property type="evidence" value="ECO:0007669"/>
    <property type="project" value="InterPro"/>
</dbReference>
<dbReference type="GO" id="GO:0006412">
    <property type="term" value="P:translation"/>
    <property type="evidence" value="ECO:0007669"/>
    <property type="project" value="UniProtKB-UniRule"/>
</dbReference>
<dbReference type="FunFam" id="4.10.640.10:FF:000004">
    <property type="entry name" value="30S ribosomal protein S18"/>
    <property type="match status" value="1"/>
</dbReference>
<dbReference type="Gene3D" id="4.10.640.10">
    <property type="entry name" value="Ribosomal protein S18"/>
    <property type="match status" value="1"/>
</dbReference>
<dbReference type="HAMAP" id="MF_00270">
    <property type="entry name" value="Ribosomal_bS18"/>
    <property type="match status" value="1"/>
</dbReference>
<dbReference type="InterPro" id="IPR001648">
    <property type="entry name" value="Ribosomal_bS18"/>
</dbReference>
<dbReference type="InterPro" id="IPR018275">
    <property type="entry name" value="Ribosomal_bS18_CS"/>
</dbReference>
<dbReference type="InterPro" id="IPR036870">
    <property type="entry name" value="Ribosomal_bS18_sf"/>
</dbReference>
<dbReference type="NCBIfam" id="TIGR00165">
    <property type="entry name" value="S18"/>
    <property type="match status" value="1"/>
</dbReference>
<dbReference type="PANTHER" id="PTHR13479">
    <property type="entry name" value="30S RIBOSOMAL PROTEIN S18"/>
    <property type="match status" value="1"/>
</dbReference>
<dbReference type="PANTHER" id="PTHR13479:SF62">
    <property type="entry name" value="SMALL RIBOSOMAL SUBUNIT PROTEIN BS18A"/>
    <property type="match status" value="1"/>
</dbReference>
<dbReference type="Pfam" id="PF01084">
    <property type="entry name" value="Ribosomal_S18"/>
    <property type="match status" value="1"/>
</dbReference>
<dbReference type="PRINTS" id="PR00974">
    <property type="entry name" value="RIBOSOMALS18"/>
</dbReference>
<dbReference type="SUPFAM" id="SSF46911">
    <property type="entry name" value="Ribosomal protein S18"/>
    <property type="match status" value="1"/>
</dbReference>
<dbReference type="PROSITE" id="PS00057">
    <property type="entry name" value="RIBOSOMAL_S18"/>
    <property type="match status" value="1"/>
</dbReference>
<proteinExistence type="inferred from homology"/>
<reference key="1">
    <citation type="submission" date="2007-02" db="EMBL/GenBank/DDBJ databases">
        <title>Complete sequence of Mycobacterium sp. JLS.</title>
        <authorList>
            <consortium name="US DOE Joint Genome Institute"/>
            <person name="Copeland A."/>
            <person name="Lucas S."/>
            <person name="Lapidus A."/>
            <person name="Barry K."/>
            <person name="Detter J.C."/>
            <person name="Glavina del Rio T."/>
            <person name="Hammon N."/>
            <person name="Israni S."/>
            <person name="Dalin E."/>
            <person name="Tice H."/>
            <person name="Pitluck S."/>
            <person name="Chain P."/>
            <person name="Malfatti S."/>
            <person name="Shin M."/>
            <person name="Vergez L."/>
            <person name="Schmutz J."/>
            <person name="Larimer F."/>
            <person name="Land M."/>
            <person name="Hauser L."/>
            <person name="Kyrpides N."/>
            <person name="Mikhailova N."/>
            <person name="Miller C.D."/>
            <person name="Anderson A.J."/>
            <person name="Sims R.C."/>
            <person name="Richardson P."/>
        </authorList>
    </citation>
    <scope>NUCLEOTIDE SEQUENCE [LARGE SCALE GENOMIC DNA]</scope>
    <source>
        <strain>JLS</strain>
    </source>
</reference>
<evidence type="ECO:0000255" key="1">
    <source>
        <dbReference type="HAMAP-Rule" id="MF_00270"/>
    </source>
</evidence>
<evidence type="ECO:0000305" key="2"/>